<gene>
    <name evidence="5" type="primary">Lhfpl3</name>
</gene>
<organism>
    <name type="scientific">Mus musculus</name>
    <name type="common">Mouse</name>
    <dbReference type="NCBI Taxonomy" id="10090"/>
    <lineage>
        <taxon>Eukaryota</taxon>
        <taxon>Metazoa</taxon>
        <taxon>Chordata</taxon>
        <taxon>Craniata</taxon>
        <taxon>Vertebrata</taxon>
        <taxon>Euteleostomi</taxon>
        <taxon>Mammalia</taxon>
        <taxon>Eutheria</taxon>
        <taxon>Euarchontoglires</taxon>
        <taxon>Glires</taxon>
        <taxon>Rodentia</taxon>
        <taxon>Myomorpha</taxon>
        <taxon>Muroidea</taxon>
        <taxon>Muridae</taxon>
        <taxon>Murinae</taxon>
        <taxon>Mus</taxon>
        <taxon>Mus</taxon>
    </lineage>
</organism>
<protein>
    <recommendedName>
        <fullName evidence="5">LHFPL tetraspan subfamily member 3 protein</fullName>
    </recommendedName>
    <alternativeName>
        <fullName evidence="1">Lipoma HMGIC fusion partner-like 3 protein</fullName>
    </alternativeName>
</protein>
<proteinExistence type="evidence at transcript level"/>
<reference key="1">
    <citation type="journal article" date="2005" name="Science">
        <title>The transcriptional landscape of the mammalian genome.</title>
        <authorList>
            <person name="Carninci P."/>
            <person name="Kasukawa T."/>
            <person name="Katayama S."/>
            <person name="Gough J."/>
            <person name="Frith M.C."/>
            <person name="Maeda N."/>
            <person name="Oyama R."/>
            <person name="Ravasi T."/>
            <person name="Lenhard B."/>
            <person name="Wells C."/>
            <person name="Kodzius R."/>
            <person name="Shimokawa K."/>
            <person name="Bajic V.B."/>
            <person name="Brenner S.E."/>
            <person name="Batalov S."/>
            <person name="Forrest A.R."/>
            <person name="Zavolan M."/>
            <person name="Davis M.J."/>
            <person name="Wilming L.G."/>
            <person name="Aidinis V."/>
            <person name="Allen J.E."/>
            <person name="Ambesi-Impiombato A."/>
            <person name="Apweiler R."/>
            <person name="Aturaliya R.N."/>
            <person name="Bailey T.L."/>
            <person name="Bansal M."/>
            <person name="Baxter L."/>
            <person name="Beisel K.W."/>
            <person name="Bersano T."/>
            <person name="Bono H."/>
            <person name="Chalk A.M."/>
            <person name="Chiu K.P."/>
            <person name="Choudhary V."/>
            <person name="Christoffels A."/>
            <person name="Clutterbuck D.R."/>
            <person name="Crowe M.L."/>
            <person name="Dalla E."/>
            <person name="Dalrymple B.P."/>
            <person name="de Bono B."/>
            <person name="Della Gatta G."/>
            <person name="di Bernardo D."/>
            <person name="Down T."/>
            <person name="Engstrom P."/>
            <person name="Fagiolini M."/>
            <person name="Faulkner G."/>
            <person name="Fletcher C.F."/>
            <person name="Fukushima T."/>
            <person name="Furuno M."/>
            <person name="Futaki S."/>
            <person name="Gariboldi M."/>
            <person name="Georgii-Hemming P."/>
            <person name="Gingeras T.R."/>
            <person name="Gojobori T."/>
            <person name="Green R.E."/>
            <person name="Gustincich S."/>
            <person name="Harbers M."/>
            <person name="Hayashi Y."/>
            <person name="Hensch T.K."/>
            <person name="Hirokawa N."/>
            <person name="Hill D."/>
            <person name="Huminiecki L."/>
            <person name="Iacono M."/>
            <person name="Ikeo K."/>
            <person name="Iwama A."/>
            <person name="Ishikawa T."/>
            <person name="Jakt M."/>
            <person name="Kanapin A."/>
            <person name="Katoh M."/>
            <person name="Kawasawa Y."/>
            <person name="Kelso J."/>
            <person name="Kitamura H."/>
            <person name="Kitano H."/>
            <person name="Kollias G."/>
            <person name="Krishnan S.P."/>
            <person name="Kruger A."/>
            <person name="Kummerfeld S.K."/>
            <person name="Kurochkin I.V."/>
            <person name="Lareau L.F."/>
            <person name="Lazarevic D."/>
            <person name="Lipovich L."/>
            <person name="Liu J."/>
            <person name="Liuni S."/>
            <person name="McWilliam S."/>
            <person name="Madan Babu M."/>
            <person name="Madera M."/>
            <person name="Marchionni L."/>
            <person name="Matsuda H."/>
            <person name="Matsuzawa S."/>
            <person name="Miki H."/>
            <person name="Mignone F."/>
            <person name="Miyake S."/>
            <person name="Morris K."/>
            <person name="Mottagui-Tabar S."/>
            <person name="Mulder N."/>
            <person name="Nakano N."/>
            <person name="Nakauchi H."/>
            <person name="Ng P."/>
            <person name="Nilsson R."/>
            <person name="Nishiguchi S."/>
            <person name="Nishikawa S."/>
            <person name="Nori F."/>
            <person name="Ohara O."/>
            <person name="Okazaki Y."/>
            <person name="Orlando V."/>
            <person name="Pang K.C."/>
            <person name="Pavan W.J."/>
            <person name="Pavesi G."/>
            <person name="Pesole G."/>
            <person name="Petrovsky N."/>
            <person name="Piazza S."/>
            <person name="Reed J."/>
            <person name="Reid J.F."/>
            <person name="Ring B.Z."/>
            <person name="Ringwald M."/>
            <person name="Rost B."/>
            <person name="Ruan Y."/>
            <person name="Salzberg S.L."/>
            <person name="Sandelin A."/>
            <person name="Schneider C."/>
            <person name="Schoenbach C."/>
            <person name="Sekiguchi K."/>
            <person name="Semple C.A."/>
            <person name="Seno S."/>
            <person name="Sessa L."/>
            <person name="Sheng Y."/>
            <person name="Shibata Y."/>
            <person name="Shimada H."/>
            <person name="Shimada K."/>
            <person name="Silva D."/>
            <person name="Sinclair B."/>
            <person name="Sperling S."/>
            <person name="Stupka E."/>
            <person name="Sugiura K."/>
            <person name="Sultana R."/>
            <person name="Takenaka Y."/>
            <person name="Taki K."/>
            <person name="Tammoja K."/>
            <person name="Tan S.L."/>
            <person name="Tang S."/>
            <person name="Taylor M.S."/>
            <person name="Tegner J."/>
            <person name="Teichmann S.A."/>
            <person name="Ueda H.R."/>
            <person name="van Nimwegen E."/>
            <person name="Verardo R."/>
            <person name="Wei C.L."/>
            <person name="Yagi K."/>
            <person name="Yamanishi H."/>
            <person name="Zabarovsky E."/>
            <person name="Zhu S."/>
            <person name="Zimmer A."/>
            <person name="Hide W."/>
            <person name="Bult C."/>
            <person name="Grimmond S.M."/>
            <person name="Teasdale R.D."/>
            <person name="Liu E.T."/>
            <person name="Brusic V."/>
            <person name="Quackenbush J."/>
            <person name="Wahlestedt C."/>
            <person name="Mattick J.S."/>
            <person name="Hume D.A."/>
            <person name="Kai C."/>
            <person name="Sasaki D."/>
            <person name="Tomaru Y."/>
            <person name="Fukuda S."/>
            <person name="Kanamori-Katayama M."/>
            <person name="Suzuki M."/>
            <person name="Aoki J."/>
            <person name="Arakawa T."/>
            <person name="Iida J."/>
            <person name="Imamura K."/>
            <person name="Itoh M."/>
            <person name="Kato T."/>
            <person name="Kawaji H."/>
            <person name="Kawagashira N."/>
            <person name="Kawashima T."/>
            <person name="Kojima M."/>
            <person name="Kondo S."/>
            <person name="Konno H."/>
            <person name="Nakano K."/>
            <person name="Ninomiya N."/>
            <person name="Nishio T."/>
            <person name="Okada M."/>
            <person name="Plessy C."/>
            <person name="Shibata K."/>
            <person name="Shiraki T."/>
            <person name="Suzuki S."/>
            <person name="Tagami M."/>
            <person name="Waki K."/>
            <person name="Watahiki A."/>
            <person name="Okamura-Oho Y."/>
            <person name="Suzuki H."/>
            <person name="Kawai J."/>
            <person name="Hayashizaki Y."/>
        </authorList>
    </citation>
    <scope>NUCLEOTIDE SEQUENCE [LARGE SCALE MRNA] OF 2-222</scope>
    <source>
        <strain>C57BL/6J</strain>
        <tissue>Retina</tissue>
    </source>
</reference>
<reference key="2">
    <citation type="journal article" date="2016" name="Sci. Rep.">
        <title>Novel function of LHFPL2 in female and male distal reproductive tract development.</title>
        <authorList>
            <person name="Zhao F."/>
            <person name="Zhou J."/>
            <person name="Li R."/>
            <person name="Dudley E.A."/>
            <person name="Ye X."/>
        </authorList>
    </citation>
    <scope>TISSUE SPECIFICITY</scope>
</reference>
<comment type="subcellular location">
    <subcellularLocation>
        <location evidence="4">Membrane</location>
        <topology evidence="4">Multi-pass membrane protein</topology>
    </subcellularLocation>
</comment>
<comment type="tissue specificity">
    <text evidence="3">Brain-specific.</text>
</comment>
<comment type="similarity">
    <text evidence="4">Belongs to the LHFP family.</text>
</comment>
<name>LHPL3_MOUSE</name>
<dbReference type="EMBL" id="AK020916">
    <property type="protein sequence ID" value="BAB32253.1"/>
    <property type="molecule type" value="mRNA"/>
</dbReference>
<dbReference type="RefSeq" id="NP_084266.1">
    <property type="nucleotide sequence ID" value="NM_029990.1"/>
</dbReference>
<dbReference type="SMR" id="Q9CTN8"/>
<dbReference type="FunCoup" id="Q9CTN8">
    <property type="interactions" value="608"/>
</dbReference>
<dbReference type="STRING" id="10090.ENSMUSP00000143576"/>
<dbReference type="iPTMnet" id="Q9CTN8"/>
<dbReference type="PhosphoSitePlus" id="Q9CTN8"/>
<dbReference type="SwissPalm" id="Q9CTN8"/>
<dbReference type="ProteomicsDB" id="265068"/>
<dbReference type="GeneID" id="269629"/>
<dbReference type="KEGG" id="mmu:269629"/>
<dbReference type="UCSC" id="uc008wpv.2">
    <property type="organism name" value="mouse"/>
</dbReference>
<dbReference type="AGR" id="MGI:1925076"/>
<dbReference type="CTD" id="375612"/>
<dbReference type="MGI" id="MGI:1925076">
    <property type="gene designation" value="Lhfpl3"/>
</dbReference>
<dbReference type="InParanoid" id="Q9CTN8"/>
<dbReference type="OrthoDB" id="5873721at2759"/>
<dbReference type="BioGRID-ORCS" id="269629">
    <property type="hits" value="1 hit in 65 CRISPR screens"/>
</dbReference>
<dbReference type="ChiTaRS" id="Lhfpl3">
    <property type="organism name" value="mouse"/>
</dbReference>
<dbReference type="PRO" id="PR:Q9CTN8"/>
<dbReference type="Proteomes" id="UP000000589">
    <property type="component" value="Unplaced"/>
</dbReference>
<dbReference type="RNAct" id="Q9CTN8">
    <property type="molecule type" value="protein"/>
</dbReference>
<dbReference type="GO" id="GO:0016020">
    <property type="term" value="C:membrane"/>
    <property type="evidence" value="ECO:0007669"/>
    <property type="project" value="UniProtKB-SubCell"/>
</dbReference>
<dbReference type="InterPro" id="IPR019372">
    <property type="entry name" value="LHFPL"/>
</dbReference>
<dbReference type="PANTHER" id="PTHR12489:SF13">
    <property type="entry name" value="LHFPL TETRASPAN SUBFAMILY MEMBER 3 PROTEIN"/>
    <property type="match status" value="1"/>
</dbReference>
<dbReference type="PANTHER" id="PTHR12489">
    <property type="entry name" value="LIPOMA HMGIC FUSION PARTNER-LIKE PROTEIN"/>
    <property type="match status" value="1"/>
</dbReference>
<dbReference type="Pfam" id="PF10242">
    <property type="entry name" value="L_HMGIC_fpl"/>
    <property type="match status" value="1"/>
</dbReference>
<sequence>MLPAQEAAKLYHTNYVRNSRAIGVLWAIFTICFAIINVVCFIQPYWIGDGVDTPQAGYFGLFHYCIGNGFSRELTCRGSFTDFSTLPSGAFKAASFFIGLSMMLIIACIVCFTLFFFCNTATVYKICAWMQLTFAACLVLGCMIFPDGWDSDEAKRMCGEKTDKYTLGACSVRWAYILAIIGILDALILSFLAVVLGNRQDSLMAEELKAENKVLLSQYSLE</sequence>
<keyword id="KW-0472">Membrane</keyword>
<keyword id="KW-1185">Reference proteome</keyword>
<keyword id="KW-0812">Transmembrane</keyword>
<keyword id="KW-1133">Transmembrane helix</keyword>
<accession>Q9CTN8</accession>
<feature type="chain" id="PRO_0000244767" description="LHFPL tetraspan subfamily member 3 protein">
    <location>
        <begin position="1"/>
        <end position="222"/>
    </location>
</feature>
<feature type="transmembrane region" description="Helical" evidence="2">
    <location>
        <begin position="22"/>
        <end position="42"/>
    </location>
</feature>
<feature type="transmembrane region" description="Helical" evidence="2">
    <location>
        <begin position="96"/>
        <end position="116"/>
    </location>
</feature>
<feature type="transmembrane region" description="Helical" evidence="2">
    <location>
        <begin position="126"/>
        <end position="146"/>
    </location>
</feature>
<feature type="transmembrane region" description="Helical" evidence="2">
    <location>
        <begin position="177"/>
        <end position="197"/>
    </location>
</feature>
<evidence type="ECO:0000250" key="1">
    <source>
        <dbReference type="UniProtKB" id="Q86UP9"/>
    </source>
</evidence>
<evidence type="ECO:0000255" key="2"/>
<evidence type="ECO:0000269" key="3">
    <source>
    </source>
</evidence>
<evidence type="ECO:0000305" key="4"/>
<evidence type="ECO:0000312" key="5">
    <source>
        <dbReference type="MGI" id="MGI:1925076"/>
    </source>
</evidence>